<organism>
    <name type="scientific">Synechococcus sp. (strain CC9902)</name>
    <dbReference type="NCBI Taxonomy" id="316279"/>
    <lineage>
        <taxon>Bacteria</taxon>
        <taxon>Bacillati</taxon>
        <taxon>Cyanobacteriota</taxon>
        <taxon>Cyanophyceae</taxon>
        <taxon>Synechococcales</taxon>
        <taxon>Synechococcaceae</taxon>
        <taxon>Synechococcus</taxon>
    </lineage>
</organism>
<reference key="1">
    <citation type="submission" date="2005-08" db="EMBL/GenBank/DDBJ databases">
        <title>Complete sequence of Synechococcus sp. CC9902.</title>
        <authorList>
            <person name="Copeland A."/>
            <person name="Lucas S."/>
            <person name="Lapidus A."/>
            <person name="Barry K."/>
            <person name="Detter J.C."/>
            <person name="Glavina T."/>
            <person name="Hammon N."/>
            <person name="Israni S."/>
            <person name="Pitluck S."/>
            <person name="Martinez M."/>
            <person name="Schmutz J."/>
            <person name="Larimer F."/>
            <person name="Land M."/>
            <person name="Kyrpides N."/>
            <person name="Ivanova N."/>
            <person name="Richardson P."/>
        </authorList>
    </citation>
    <scope>NUCLEOTIDE SEQUENCE [LARGE SCALE GENOMIC DNA]</scope>
    <source>
        <strain>CC9902</strain>
    </source>
</reference>
<name>CHLL_SYNS9</name>
<dbReference type="EC" id="1.3.7.7" evidence="1"/>
<dbReference type="EMBL" id="CP000097">
    <property type="protein sequence ID" value="ABB26579.1"/>
    <property type="status" value="ALT_INIT"/>
    <property type="molecule type" value="Genomic_DNA"/>
</dbReference>
<dbReference type="SMR" id="Q3AWT4"/>
<dbReference type="STRING" id="316279.Syncc9902_1621"/>
<dbReference type="KEGG" id="sye:Syncc9902_1621"/>
<dbReference type="eggNOG" id="COG1348">
    <property type="taxonomic scope" value="Bacteria"/>
</dbReference>
<dbReference type="HOGENOM" id="CLU_059373_2_0_3"/>
<dbReference type="OrthoDB" id="9778641at2"/>
<dbReference type="UniPathway" id="UPA00670"/>
<dbReference type="Proteomes" id="UP000002712">
    <property type="component" value="Chromosome"/>
</dbReference>
<dbReference type="GO" id="GO:0051539">
    <property type="term" value="F:4 iron, 4 sulfur cluster binding"/>
    <property type="evidence" value="ECO:0007669"/>
    <property type="project" value="UniProtKB-UniRule"/>
</dbReference>
<dbReference type="GO" id="GO:0005524">
    <property type="term" value="F:ATP binding"/>
    <property type="evidence" value="ECO:0007669"/>
    <property type="project" value="UniProtKB-UniRule"/>
</dbReference>
<dbReference type="GO" id="GO:0046872">
    <property type="term" value="F:metal ion binding"/>
    <property type="evidence" value="ECO:0007669"/>
    <property type="project" value="UniProtKB-KW"/>
</dbReference>
<dbReference type="GO" id="GO:0016730">
    <property type="term" value="F:oxidoreductase activity, acting on iron-sulfur proteins as donors"/>
    <property type="evidence" value="ECO:0007669"/>
    <property type="project" value="InterPro"/>
</dbReference>
<dbReference type="GO" id="GO:0016636">
    <property type="term" value="F:oxidoreductase activity, acting on the CH-CH group of donors, iron-sulfur protein as acceptor"/>
    <property type="evidence" value="ECO:0007669"/>
    <property type="project" value="UniProtKB-UniRule"/>
</dbReference>
<dbReference type="GO" id="GO:0036068">
    <property type="term" value="P:light-independent chlorophyll biosynthetic process"/>
    <property type="evidence" value="ECO:0007669"/>
    <property type="project" value="UniProtKB-UniRule"/>
</dbReference>
<dbReference type="GO" id="GO:0019685">
    <property type="term" value="P:photosynthesis, dark reaction"/>
    <property type="evidence" value="ECO:0007669"/>
    <property type="project" value="InterPro"/>
</dbReference>
<dbReference type="CDD" id="cd02032">
    <property type="entry name" value="Bchl-like"/>
    <property type="match status" value="1"/>
</dbReference>
<dbReference type="Gene3D" id="3.40.50.300">
    <property type="entry name" value="P-loop containing nucleotide triphosphate hydrolases"/>
    <property type="match status" value="1"/>
</dbReference>
<dbReference type="HAMAP" id="MF_00355">
    <property type="entry name" value="ChlL_BchL"/>
    <property type="match status" value="1"/>
</dbReference>
<dbReference type="InterPro" id="IPR030655">
    <property type="entry name" value="NifH/chlL_CS"/>
</dbReference>
<dbReference type="InterPro" id="IPR000392">
    <property type="entry name" value="NifH/frxC"/>
</dbReference>
<dbReference type="InterPro" id="IPR027417">
    <property type="entry name" value="P-loop_NTPase"/>
</dbReference>
<dbReference type="InterPro" id="IPR005971">
    <property type="entry name" value="Protochlorophyllide_ATP-bd"/>
</dbReference>
<dbReference type="NCBIfam" id="TIGR01281">
    <property type="entry name" value="DPOR_bchL"/>
    <property type="match status" value="1"/>
</dbReference>
<dbReference type="PANTHER" id="PTHR42864">
    <property type="entry name" value="LIGHT-INDEPENDENT PROTOCHLOROPHYLLIDE REDUCTASE IRON-SULFUR ATP-BINDING PROTEIN"/>
    <property type="match status" value="1"/>
</dbReference>
<dbReference type="PANTHER" id="PTHR42864:SF2">
    <property type="entry name" value="LIGHT-INDEPENDENT PROTOCHLOROPHYLLIDE REDUCTASE IRON-SULFUR ATP-BINDING PROTEIN"/>
    <property type="match status" value="1"/>
</dbReference>
<dbReference type="Pfam" id="PF00142">
    <property type="entry name" value="Fer4_NifH"/>
    <property type="match status" value="1"/>
</dbReference>
<dbReference type="PIRSF" id="PIRSF000363">
    <property type="entry name" value="Nitrogenase_iron"/>
    <property type="match status" value="1"/>
</dbReference>
<dbReference type="PRINTS" id="PR00091">
    <property type="entry name" value="NITROGNASEII"/>
</dbReference>
<dbReference type="SUPFAM" id="SSF52540">
    <property type="entry name" value="P-loop containing nucleoside triphosphate hydrolases"/>
    <property type="match status" value="1"/>
</dbReference>
<dbReference type="PROSITE" id="PS00746">
    <property type="entry name" value="NIFH_FRXC_1"/>
    <property type="match status" value="1"/>
</dbReference>
<dbReference type="PROSITE" id="PS00692">
    <property type="entry name" value="NIFH_FRXC_2"/>
    <property type="match status" value="1"/>
</dbReference>
<dbReference type="PROSITE" id="PS51026">
    <property type="entry name" value="NIFH_FRXC_3"/>
    <property type="match status" value="1"/>
</dbReference>
<gene>
    <name evidence="1" type="primary">chlL</name>
    <name type="ordered locus">Syncc9902_1621</name>
</gene>
<keyword id="KW-0004">4Fe-4S</keyword>
<keyword id="KW-0067">ATP-binding</keyword>
<keyword id="KW-0149">Chlorophyll biosynthesis</keyword>
<keyword id="KW-0408">Iron</keyword>
<keyword id="KW-0411">Iron-sulfur</keyword>
<keyword id="KW-0460">Magnesium</keyword>
<keyword id="KW-0479">Metal-binding</keyword>
<keyword id="KW-0547">Nucleotide-binding</keyword>
<keyword id="KW-0560">Oxidoreductase</keyword>
<keyword id="KW-0602">Photosynthesis</keyword>
<keyword id="KW-1185">Reference proteome</keyword>
<sequence>MTTTLSRPTDGEGSVQVQQDPSMKIEEGALVIAVYGKGGIGKSTTSSNLSAAFSKLGKRVLQIGCDPKHDSTFTLTHSMVPTVIDILEEVDFHSEELRPDDFVFTGYNGVKCVESGGPPAGTGCGGYVTGQTVKLLKEHHLLEDTDVVIFDVLGDVVCGGFAAPLQHANYCLIVTANDFDSIFAMNRIVQAIQAKAKNYKVRLGGVIANRSADTDQIDKFNERTGLRTMAHFKDVDAIRRSRLKKCTIFEMDDDDDAVKAVKNEYLRLAQNMLDNVEPLEAVSLKDREIFDLLGFD</sequence>
<proteinExistence type="inferred from homology"/>
<feature type="chain" id="PRO_0000324077" description="Light-independent protochlorophyllide reductase iron-sulfur ATP-binding protein">
    <location>
        <begin position="1"/>
        <end position="296"/>
    </location>
</feature>
<feature type="region of interest" description="Disordered" evidence="2">
    <location>
        <begin position="1"/>
        <end position="20"/>
    </location>
</feature>
<feature type="binding site" evidence="1">
    <location>
        <begin position="39"/>
        <end position="44"/>
    </location>
    <ligand>
        <name>ATP</name>
        <dbReference type="ChEBI" id="CHEBI:30616"/>
    </ligand>
</feature>
<feature type="binding site" evidence="1">
    <location>
        <position position="43"/>
    </location>
    <ligand>
        <name>Mg(2+)</name>
        <dbReference type="ChEBI" id="CHEBI:18420"/>
    </ligand>
</feature>
<feature type="binding site" evidence="1">
    <location>
        <position position="68"/>
    </location>
    <ligand>
        <name>ATP</name>
        <dbReference type="ChEBI" id="CHEBI:30616"/>
    </ligand>
</feature>
<feature type="binding site" evidence="1">
    <location>
        <position position="124"/>
    </location>
    <ligand>
        <name>[4Fe-4S] cluster</name>
        <dbReference type="ChEBI" id="CHEBI:49883"/>
        <note>ligand shared between dimeric partners</note>
    </ligand>
</feature>
<feature type="binding site" evidence="1">
    <location>
        <position position="158"/>
    </location>
    <ligand>
        <name>[4Fe-4S] cluster</name>
        <dbReference type="ChEBI" id="CHEBI:49883"/>
        <note>ligand shared between dimeric partners</note>
    </ligand>
</feature>
<feature type="binding site" evidence="1">
    <location>
        <begin position="209"/>
        <end position="210"/>
    </location>
    <ligand>
        <name>ATP</name>
        <dbReference type="ChEBI" id="CHEBI:30616"/>
    </ligand>
</feature>
<accession>Q3AWT4</accession>
<protein>
    <recommendedName>
        <fullName evidence="1">Light-independent protochlorophyllide reductase iron-sulfur ATP-binding protein</fullName>
        <shortName evidence="1">DPOR subunit L</shortName>
        <shortName evidence="1">LI-POR subunit L</shortName>
        <ecNumber evidence="1">1.3.7.7</ecNumber>
    </recommendedName>
</protein>
<comment type="function">
    <text evidence="1">Component of the dark-operative protochlorophyllide reductase (DPOR) that uses Mg-ATP and reduced ferredoxin to reduce ring D of protochlorophyllide (Pchlide) to form chlorophyllide a (Chlide). This reaction is light-independent. The L component serves as a unique electron donor to the NB-component of the complex, and binds Mg-ATP.</text>
</comment>
<comment type="catalytic activity">
    <reaction evidence="1">
        <text>chlorophyllide a + oxidized 2[4Fe-4S]-[ferredoxin] + 2 ADP + 2 phosphate = protochlorophyllide a + reduced 2[4Fe-4S]-[ferredoxin] + 2 ATP + 2 H2O</text>
        <dbReference type="Rhea" id="RHEA:28202"/>
        <dbReference type="Rhea" id="RHEA-COMP:10002"/>
        <dbReference type="Rhea" id="RHEA-COMP:10004"/>
        <dbReference type="ChEBI" id="CHEBI:15377"/>
        <dbReference type="ChEBI" id="CHEBI:30616"/>
        <dbReference type="ChEBI" id="CHEBI:33722"/>
        <dbReference type="ChEBI" id="CHEBI:33723"/>
        <dbReference type="ChEBI" id="CHEBI:43474"/>
        <dbReference type="ChEBI" id="CHEBI:83348"/>
        <dbReference type="ChEBI" id="CHEBI:83350"/>
        <dbReference type="ChEBI" id="CHEBI:456216"/>
        <dbReference type="EC" id="1.3.7.7"/>
    </reaction>
</comment>
<comment type="cofactor">
    <cofactor evidence="1">
        <name>[4Fe-4S] cluster</name>
        <dbReference type="ChEBI" id="CHEBI:49883"/>
    </cofactor>
    <text evidence="1">Binds 1 [4Fe-4S] cluster per dimer.</text>
</comment>
<comment type="pathway">
    <text evidence="1">Porphyrin-containing compound metabolism; chlorophyll biosynthesis (light-independent).</text>
</comment>
<comment type="subunit">
    <text evidence="1">Homodimer. Protochlorophyllide reductase is composed of three subunits; ChlL, ChlN and ChlB.</text>
</comment>
<comment type="similarity">
    <text evidence="1">Belongs to the NifH/BchL/ChlL family.</text>
</comment>
<comment type="sequence caution" evidence="3">
    <conflict type="erroneous initiation">
        <sequence resource="EMBL-CDS" id="ABB26579"/>
    </conflict>
</comment>
<evidence type="ECO:0000255" key="1">
    <source>
        <dbReference type="HAMAP-Rule" id="MF_00355"/>
    </source>
</evidence>
<evidence type="ECO:0000256" key="2">
    <source>
        <dbReference type="SAM" id="MobiDB-lite"/>
    </source>
</evidence>
<evidence type="ECO:0000305" key="3"/>